<accession>P58671</accession>
<reference key="1">
    <citation type="journal article" date="2001" name="Nature">
        <title>Complete genome sequence of Salmonella enterica serovar Typhimurium LT2.</title>
        <authorList>
            <person name="McClelland M."/>
            <person name="Sanderson K.E."/>
            <person name="Spieth J."/>
            <person name="Clifton S.W."/>
            <person name="Latreille P."/>
            <person name="Courtney L."/>
            <person name="Porwollik S."/>
            <person name="Ali J."/>
            <person name="Dante M."/>
            <person name="Du F."/>
            <person name="Hou S."/>
            <person name="Layman D."/>
            <person name="Leonard S."/>
            <person name="Nguyen C."/>
            <person name="Scott K."/>
            <person name="Holmes A."/>
            <person name="Grewal N."/>
            <person name="Mulvaney E."/>
            <person name="Ryan E."/>
            <person name="Sun H."/>
            <person name="Florea L."/>
            <person name="Miller W."/>
            <person name="Stoneking T."/>
            <person name="Nhan M."/>
            <person name="Waterston R."/>
            <person name="Wilson R.K."/>
        </authorList>
    </citation>
    <scope>NUCLEOTIDE SEQUENCE [LARGE SCALE GENOMIC DNA]</scope>
    <source>
        <strain>LT2 / SGSC1412 / ATCC 700720</strain>
    </source>
</reference>
<proteinExistence type="inferred from homology"/>
<feature type="chain" id="PRO_0000190629" description="4-hydroxy-3-methylbut-2-en-1-yl diphosphate synthase (flavodoxin)">
    <location>
        <begin position="1"/>
        <end position="372"/>
    </location>
</feature>
<feature type="binding site" evidence="1">
    <location>
        <position position="270"/>
    </location>
    <ligand>
        <name>[4Fe-4S] cluster</name>
        <dbReference type="ChEBI" id="CHEBI:49883"/>
    </ligand>
</feature>
<feature type="binding site" evidence="1">
    <location>
        <position position="273"/>
    </location>
    <ligand>
        <name>[4Fe-4S] cluster</name>
        <dbReference type="ChEBI" id="CHEBI:49883"/>
    </ligand>
</feature>
<feature type="binding site" evidence="1">
    <location>
        <position position="305"/>
    </location>
    <ligand>
        <name>[4Fe-4S] cluster</name>
        <dbReference type="ChEBI" id="CHEBI:49883"/>
    </ligand>
</feature>
<feature type="binding site" evidence="1">
    <location>
        <position position="312"/>
    </location>
    <ligand>
        <name>[4Fe-4S] cluster</name>
        <dbReference type="ChEBI" id="CHEBI:49883"/>
    </ligand>
</feature>
<gene>
    <name evidence="1" type="primary">ispG</name>
    <name type="synonym">gcpE</name>
    <name type="ordered locus">STM2523</name>
</gene>
<evidence type="ECO:0000255" key="1">
    <source>
        <dbReference type="HAMAP-Rule" id="MF_00159"/>
    </source>
</evidence>
<name>ISPG_SALTY</name>
<sequence>MHNQAPIQRRKSTRIYVGNVPIGDGAPIAVQSMTNTRTTDVEATVNQIKALERVGADIVRVSVPTMDAAEAFKLIKQQVNVPLVADIHFDYRIALKVAEYGVDCLRINPGNIGNEERIRMVVDCARDKNIPIRIGVNAGSLEKDLQEKYGEPTPQALLESAMRHVDHLDRLNFDQFKVSVKASDVFLAVESYRLLAKQIDQPLHLGITEAGGARSGAVKSAIGLGLLLSEGIGDTLRVSLAADPVEEIKVGFDILKSLRIRARGINFIACPTCSRQEFDVIGTVNALEQRLEDIITPMDVSIIGCVVNGPGEALVSTLGVTGGNKKSGLYEDGVRKDRLDNDDMIAQLESRIRAKASQLDEARRIDVLQVEK</sequence>
<protein>
    <recommendedName>
        <fullName evidence="1">4-hydroxy-3-methylbut-2-en-1-yl diphosphate synthase (flavodoxin)</fullName>
        <ecNumber evidence="1">1.17.7.3</ecNumber>
    </recommendedName>
    <alternativeName>
        <fullName evidence="1">1-hydroxy-2-methyl-2-(E)-butenyl 4-diphosphate synthase</fullName>
    </alternativeName>
</protein>
<keyword id="KW-0004">4Fe-4S</keyword>
<keyword id="KW-0408">Iron</keyword>
<keyword id="KW-0411">Iron-sulfur</keyword>
<keyword id="KW-0414">Isoprene biosynthesis</keyword>
<keyword id="KW-0479">Metal-binding</keyword>
<keyword id="KW-0560">Oxidoreductase</keyword>
<keyword id="KW-1185">Reference proteome</keyword>
<organism>
    <name type="scientific">Salmonella typhimurium (strain LT2 / SGSC1412 / ATCC 700720)</name>
    <dbReference type="NCBI Taxonomy" id="99287"/>
    <lineage>
        <taxon>Bacteria</taxon>
        <taxon>Pseudomonadati</taxon>
        <taxon>Pseudomonadota</taxon>
        <taxon>Gammaproteobacteria</taxon>
        <taxon>Enterobacterales</taxon>
        <taxon>Enterobacteriaceae</taxon>
        <taxon>Salmonella</taxon>
    </lineage>
</organism>
<comment type="function">
    <text evidence="1">Converts 2C-methyl-D-erythritol 2,4-cyclodiphosphate (ME-2,4cPP) into 1-hydroxy-2-methyl-2-(E)-butenyl 4-diphosphate.</text>
</comment>
<comment type="catalytic activity">
    <reaction evidence="1">
        <text>(2E)-4-hydroxy-3-methylbut-2-enyl diphosphate + oxidized [flavodoxin] + H2O + 2 H(+) = 2-C-methyl-D-erythritol 2,4-cyclic diphosphate + reduced [flavodoxin]</text>
        <dbReference type="Rhea" id="RHEA:43604"/>
        <dbReference type="Rhea" id="RHEA-COMP:10622"/>
        <dbReference type="Rhea" id="RHEA-COMP:10623"/>
        <dbReference type="ChEBI" id="CHEBI:15377"/>
        <dbReference type="ChEBI" id="CHEBI:15378"/>
        <dbReference type="ChEBI" id="CHEBI:57618"/>
        <dbReference type="ChEBI" id="CHEBI:58210"/>
        <dbReference type="ChEBI" id="CHEBI:58483"/>
        <dbReference type="ChEBI" id="CHEBI:128753"/>
        <dbReference type="EC" id="1.17.7.3"/>
    </reaction>
</comment>
<comment type="cofactor">
    <cofactor evidence="1">
        <name>[4Fe-4S] cluster</name>
        <dbReference type="ChEBI" id="CHEBI:49883"/>
    </cofactor>
    <text evidence="1">Binds 1 [4Fe-4S] cluster.</text>
</comment>
<comment type="pathway">
    <text evidence="1">Isoprenoid biosynthesis; isopentenyl diphosphate biosynthesis via DXP pathway; isopentenyl diphosphate from 1-deoxy-D-xylulose 5-phosphate: step 5/6.</text>
</comment>
<comment type="similarity">
    <text evidence="1">Belongs to the IspG family.</text>
</comment>
<dbReference type="EC" id="1.17.7.3" evidence="1"/>
<dbReference type="EMBL" id="AE006468">
    <property type="protein sequence ID" value="AAL21417.1"/>
    <property type="molecule type" value="Genomic_DNA"/>
</dbReference>
<dbReference type="RefSeq" id="NP_461458.1">
    <property type="nucleotide sequence ID" value="NC_003197.2"/>
</dbReference>
<dbReference type="RefSeq" id="WP_000551804.1">
    <property type="nucleotide sequence ID" value="NC_003197.2"/>
</dbReference>
<dbReference type="SMR" id="P58671"/>
<dbReference type="STRING" id="99287.STM2523"/>
<dbReference type="PaxDb" id="99287-STM2523"/>
<dbReference type="GeneID" id="1254045"/>
<dbReference type="KEGG" id="stm:STM2523"/>
<dbReference type="PATRIC" id="fig|99287.12.peg.2660"/>
<dbReference type="HOGENOM" id="CLU_042258_0_0_6"/>
<dbReference type="OMA" id="PTCGRTQ"/>
<dbReference type="PhylomeDB" id="P58671"/>
<dbReference type="BioCyc" id="SENT99287:STM2523-MONOMER"/>
<dbReference type="UniPathway" id="UPA00056">
    <property type="reaction ID" value="UER00096"/>
</dbReference>
<dbReference type="Proteomes" id="UP000001014">
    <property type="component" value="Chromosome"/>
</dbReference>
<dbReference type="GO" id="GO:0051539">
    <property type="term" value="F:4 iron, 4 sulfur cluster binding"/>
    <property type="evidence" value="ECO:0007669"/>
    <property type="project" value="UniProtKB-UniRule"/>
</dbReference>
<dbReference type="GO" id="GO:0046429">
    <property type="term" value="F:4-hydroxy-3-methylbut-2-en-1-yl diphosphate synthase activity (ferredoxin)"/>
    <property type="evidence" value="ECO:0000318"/>
    <property type="project" value="GO_Central"/>
</dbReference>
<dbReference type="GO" id="GO:0141197">
    <property type="term" value="F:4-hydroxy-3-methylbut-2-enyl-diphosphate synthase activity (flavodoxin)"/>
    <property type="evidence" value="ECO:0007669"/>
    <property type="project" value="UniProtKB-EC"/>
</dbReference>
<dbReference type="GO" id="GO:0005506">
    <property type="term" value="F:iron ion binding"/>
    <property type="evidence" value="ECO:0007669"/>
    <property type="project" value="InterPro"/>
</dbReference>
<dbReference type="GO" id="GO:0019288">
    <property type="term" value="P:isopentenyl diphosphate biosynthetic process, methylerythritol 4-phosphate pathway"/>
    <property type="evidence" value="ECO:0000318"/>
    <property type="project" value="GO_Central"/>
</dbReference>
<dbReference type="GO" id="GO:0016114">
    <property type="term" value="P:terpenoid biosynthetic process"/>
    <property type="evidence" value="ECO:0007669"/>
    <property type="project" value="InterPro"/>
</dbReference>
<dbReference type="FunFam" id="3.20.20.20:FF:000001">
    <property type="entry name" value="4-hydroxy-3-methylbut-2-en-1-yl diphosphate synthase (flavodoxin)"/>
    <property type="match status" value="1"/>
</dbReference>
<dbReference type="FunFam" id="3.30.413.10:FF:000002">
    <property type="entry name" value="4-hydroxy-3-methylbut-2-en-1-yl diphosphate synthase (flavodoxin)"/>
    <property type="match status" value="1"/>
</dbReference>
<dbReference type="Gene3D" id="3.20.20.20">
    <property type="entry name" value="Dihydropteroate synthase-like"/>
    <property type="match status" value="1"/>
</dbReference>
<dbReference type="Gene3D" id="3.30.413.10">
    <property type="entry name" value="Sulfite Reductase Hemoprotein, domain 1"/>
    <property type="match status" value="1"/>
</dbReference>
<dbReference type="HAMAP" id="MF_00159">
    <property type="entry name" value="IspG"/>
    <property type="match status" value="1"/>
</dbReference>
<dbReference type="InterPro" id="IPR011005">
    <property type="entry name" value="Dihydropteroate_synth-like_sf"/>
</dbReference>
<dbReference type="InterPro" id="IPR016425">
    <property type="entry name" value="IspG_bac"/>
</dbReference>
<dbReference type="InterPro" id="IPR004588">
    <property type="entry name" value="IspG_bac-typ"/>
</dbReference>
<dbReference type="InterPro" id="IPR045854">
    <property type="entry name" value="NO2/SO3_Rdtase_4Fe4S_sf"/>
</dbReference>
<dbReference type="NCBIfam" id="TIGR00612">
    <property type="entry name" value="ispG_gcpE"/>
    <property type="match status" value="1"/>
</dbReference>
<dbReference type="NCBIfam" id="NF001540">
    <property type="entry name" value="PRK00366.1"/>
    <property type="match status" value="1"/>
</dbReference>
<dbReference type="PANTHER" id="PTHR30454">
    <property type="entry name" value="4-HYDROXY-3-METHYLBUT-2-EN-1-YL DIPHOSPHATE SYNTHASE"/>
    <property type="match status" value="1"/>
</dbReference>
<dbReference type="PANTHER" id="PTHR30454:SF0">
    <property type="entry name" value="4-HYDROXY-3-METHYLBUT-2-EN-1-YL DIPHOSPHATE SYNTHASE (FERREDOXIN), CHLOROPLASTIC"/>
    <property type="match status" value="1"/>
</dbReference>
<dbReference type="Pfam" id="PF04551">
    <property type="entry name" value="GcpE"/>
    <property type="match status" value="1"/>
</dbReference>
<dbReference type="PIRSF" id="PIRSF004640">
    <property type="entry name" value="IspG"/>
    <property type="match status" value="1"/>
</dbReference>
<dbReference type="SUPFAM" id="SSF51717">
    <property type="entry name" value="Dihydropteroate synthetase-like"/>
    <property type="match status" value="1"/>
</dbReference>
<dbReference type="SUPFAM" id="SSF56014">
    <property type="entry name" value="Nitrite and sulphite reductase 4Fe-4S domain-like"/>
    <property type="match status" value="1"/>
</dbReference>